<gene>
    <name evidence="1" type="primary">plsB</name>
    <name type="ordered locus">HDEF_0089</name>
</gene>
<feature type="chain" id="PRO_1000205850" description="Glycerol-3-phosphate acyltransferase">
    <location>
        <begin position="1"/>
        <end position="816"/>
    </location>
</feature>
<feature type="short sequence motif" description="HXXXXD motif">
    <location>
        <begin position="298"/>
        <end position="303"/>
    </location>
</feature>
<comment type="catalytic activity">
    <reaction evidence="1">
        <text>sn-glycerol 3-phosphate + an acyl-CoA = a 1-acyl-sn-glycero-3-phosphate + CoA</text>
        <dbReference type="Rhea" id="RHEA:15325"/>
        <dbReference type="ChEBI" id="CHEBI:57287"/>
        <dbReference type="ChEBI" id="CHEBI:57597"/>
        <dbReference type="ChEBI" id="CHEBI:57970"/>
        <dbReference type="ChEBI" id="CHEBI:58342"/>
        <dbReference type="EC" id="2.3.1.15"/>
    </reaction>
</comment>
<comment type="pathway">
    <text evidence="1">Phospholipid metabolism; CDP-diacylglycerol biosynthesis; CDP-diacylglycerol from sn-glycerol 3-phosphate: step 1/3.</text>
</comment>
<comment type="subcellular location">
    <subcellularLocation>
        <location evidence="1">Cell membrane</location>
        <topology evidence="1">Peripheral membrane protein</topology>
        <orientation evidence="1">Cytoplasmic side</orientation>
    </subcellularLocation>
</comment>
<comment type="domain">
    <text evidence="1">The HXXXXD motif is essential for acyltransferase activity and may constitute the binding site for the phosphate moiety of the glycerol-3-phosphate.</text>
</comment>
<comment type="similarity">
    <text evidence="1">Belongs to the GPAT/DAPAT family.</text>
</comment>
<accession>C4K8M7</accession>
<keyword id="KW-0012">Acyltransferase</keyword>
<keyword id="KW-1003">Cell membrane</keyword>
<keyword id="KW-0444">Lipid biosynthesis</keyword>
<keyword id="KW-0443">Lipid metabolism</keyword>
<keyword id="KW-0472">Membrane</keyword>
<keyword id="KW-0594">Phospholipid biosynthesis</keyword>
<keyword id="KW-1208">Phospholipid metabolism</keyword>
<keyword id="KW-0808">Transferase</keyword>
<evidence type="ECO:0000255" key="1">
    <source>
        <dbReference type="HAMAP-Rule" id="MF_00393"/>
    </source>
</evidence>
<name>PLSB_HAMD5</name>
<dbReference type="EC" id="2.3.1.15" evidence="1"/>
<dbReference type="EMBL" id="CP001277">
    <property type="protein sequence ID" value="ACQ66864.1"/>
    <property type="molecule type" value="Genomic_DNA"/>
</dbReference>
<dbReference type="RefSeq" id="WP_012737829.1">
    <property type="nucleotide sequence ID" value="NC_012751.1"/>
</dbReference>
<dbReference type="SMR" id="C4K8M7"/>
<dbReference type="STRING" id="572265.HDEF_0089"/>
<dbReference type="GeneID" id="66260030"/>
<dbReference type="KEGG" id="hde:HDEF_0089"/>
<dbReference type="eggNOG" id="COG2937">
    <property type="taxonomic scope" value="Bacteria"/>
</dbReference>
<dbReference type="HOGENOM" id="CLU_015407_0_0_6"/>
<dbReference type="UniPathway" id="UPA00557">
    <property type="reaction ID" value="UER00612"/>
</dbReference>
<dbReference type="Proteomes" id="UP000002334">
    <property type="component" value="Chromosome"/>
</dbReference>
<dbReference type="GO" id="GO:0005886">
    <property type="term" value="C:plasma membrane"/>
    <property type="evidence" value="ECO:0007669"/>
    <property type="project" value="UniProtKB-SubCell"/>
</dbReference>
<dbReference type="GO" id="GO:0004366">
    <property type="term" value="F:glycerol-3-phosphate O-acyltransferase activity"/>
    <property type="evidence" value="ECO:0007669"/>
    <property type="project" value="UniProtKB-UniRule"/>
</dbReference>
<dbReference type="GO" id="GO:0016024">
    <property type="term" value="P:CDP-diacylglycerol biosynthetic process"/>
    <property type="evidence" value="ECO:0007669"/>
    <property type="project" value="UniProtKB-UniRule"/>
</dbReference>
<dbReference type="GO" id="GO:0006631">
    <property type="term" value="P:fatty acid metabolic process"/>
    <property type="evidence" value="ECO:0007669"/>
    <property type="project" value="TreeGrafter"/>
</dbReference>
<dbReference type="CDD" id="cd07993">
    <property type="entry name" value="LPLAT_DHAPAT-like"/>
    <property type="match status" value="1"/>
</dbReference>
<dbReference type="HAMAP" id="MF_00393">
    <property type="entry name" value="Glyc3P_acyltrans"/>
    <property type="match status" value="1"/>
</dbReference>
<dbReference type="InterPro" id="IPR022284">
    <property type="entry name" value="GPAT/DHAPAT"/>
</dbReference>
<dbReference type="InterPro" id="IPR045520">
    <property type="entry name" value="GPAT/DHAPAT_C"/>
</dbReference>
<dbReference type="InterPro" id="IPR041728">
    <property type="entry name" value="GPAT/DHAPAT_LPLAT"/>
</dbReference>
<dbReference type="InterPro" id="IPR028354">
    <property type="entry name" value="GPAT_PlsB"/>
</dbReference>
<dbReference type="InterPro" id="IPR002123">
    <property type="entry name" value="Plipid/glycerol_acylTrfase"/>
</dbReference>
<dbReference type="NCBIfam" id="TIGR03703">
    <property type="entry name" value="plsB"/>
    <property type="match status" value="1"/>
</dbReference>
<dbReference type="NCBIfam" id="NF003441">
    <property type="entry name" value="PRK04974.1"/>
    <property type="match status" value="1"/>
</dbReference>
<dbReference type="PANTHER" id="PTHR12563:SF17">
    <property type="entry name" value="DIHYDROXYACETONE PHOSPHATE ACYLTRANSFERASE"/>
    <property type="match status" value="1"/>
</dbReference>
<dbReference type="PANTHER" id="PTHR12563">
    <property type="entry name" value="GLYCEROL-3-PHOSPHATE ACYLTRANSFERASE"/>
    <property type="match status" value="1"/>
</dbReference>
<dbReference type="Pfam" id="PF01553">
    <property type="entry name" value="Acyltransferase"/>
    <property type="match status" value="1"/>
</dbReference>
<dbReference type="Pfam" id="PF19277">
    <property type="entry name" value="GPAT_C"/>
    <property type="match status" value="1"/>
</dbReference>
<dbReference type="PIRSF" id="PIRSF500064">
    <property type="entry name" value="GPAT"/>
    <property type="match status" value="1"/>
</dbReference>
<dbReference type="PIRSF" id="PIRSF000437">
    <property type="entry name" value="GPAT_DHAPAT"/>
    <property type="match status" value="1"/>
</dbReference>
<dbReference type="SMART" id="SM00563">
    <property type="entry name" value="PlsC"/>
    <property type="match status" value="1"/>
</dbReference>
<dbReference type="SUPFAM" id="SSF69593">
    <property type="entry name" value="Glycerol-3-phosphate (1)-acyltransferase"/>
    <property type="match status" value="1"/>
</dbReference>
<protein>
    <recommendedName>
        <fullName evidence="1">Glycerol-3-phosphate acyltransferase</fullName>
        <shortName evidence="1">GPAT</shortName>
        <ecNumber evidence="1">2.3.1.15</ecNumber>
    </recommendedName>
</protein>
<reference key="1">
    <citation type="journal article" date="2009" name="Proc. Natl. Acad. Sci. U.S.A.">
        <title>Hamiltonella defensa, genome evolution of protective bacterial endosymbiont from pathogenic ancestors.</title>
        <authorList>
            <person name="Degnan P.H."/>
            <person name="Yu Y."/>
            <person name="Sisneros N."/>
            <person name="Wing R.A."/>
            <person name="Moran N.A."/>
        </authorList>
    </citation>
    <scope>NUCLEOTIDE SEQUENCE [LARGE SCALE GENOMIC DNA]</scope>
    <source>
        <strain>5AT</strain>
    </source>
</reference>
<proteinExistence type="inferred from homology"/>
<organism>
    <name type="scientific">Hamiltonella defensa subsp. Acyrthosiphon pisum (strain 5AT)</name>
    <dbReference type="NCBI Taxonomy" id="572265"/>
    <lineage>
        <taxon>Bacteria</taxon>
        <taxon>Pseudomonadati</taxon>
        <taxon>Pseudomonadota</taxon>
        <taxon>Gammaproteobacteria</taxon>
        <taxon>Enterobacterales</taxon>
        <taxon>Enterobacteriaceae</taxon>
        <taxon>aphid secondary symbionts</taxon>
        <taxon>Candidatus Hamiltonella</taxon>
    </lineage>
</organism>
<sequence length="816" mass="94735">MSDRCKIYYQSLYLFVKIFIKSKLIPKNFVTDSGLDSSSPIFYILPSRSKMDLIILREESLKQGLPDPLTPLKVDEIQIPRYLFIDDIKESHGHSPSSAETLFSRYLGLYSKNSTLDITILPVSVMIGRRPISICQNRKINRLQKFFTAFWLGRDSFVHFSNPISLSRIINAHSKDLRIVYKLARVARIHFFRQYLSSVGRALPVHSDLFKKLLSSEAIEKALLDEARSKKISPQKAHDNALRLMKEIASQVSYETIRLSDRVLGWMWNRFYQGIHVHNADCVRQLAYKGHSIVYVPCHRSHMDYLLLSYVLYYEGLATPHIAAGINLNFWPAGAIFRRLGAFFIRRNFKGNKLYSTIFRAYLDELFTGGYPVEYFIEGGRSRTGLLLEPKTGTLSMTIQAMLRDISPSITLIPVYIGYEHVIEVLSYTKELRGERKKKENFFQMIGGLRQLRHLGQGYVNFGEPIQLKLYLDKNVPDWRESIRPINKIEATRPHWLASTVKDLAYQIMININHAAAINAINLCSTALLASENQALTRPELLEQLNCYLQLMRHAPHNQYSSVTDQMPEELLDHALHMNKFVVQKNHPHERICLPKEQVPLMRYYRNNIQHLLILPSLIATTVLCHHNISRQEIIRQITLLYPVFKIRWFLYYSEKQLLEALNLLMDELIRQKCVENKNHHFVVNLSSGMMTLKILASGIKEILQHYSIIFFLLTVYPDIDRKSLEKESRAMAKHLCILENMPSAEFFHSSIFSGLLTLLFEKREKMVSNDYSAQKNIEEIFNILKGLISSQMISVMQENFSLKKEWLTYKKKTTD</sequence>